<proteinExistence type="inferred from homology"/>
<sequence length="335" mass="36041">MKSLMLVVLGNTEISTVPGISVAGATPELTKLTPPADAEYLFYEKPKIIDVIPVTPDGHPTPAIITKAARELANFPLMIVRGGTYLAPLVPHVHISDYVGRDFRKGPALQEAEEIIARARLFGEELSNTPIEELVIGESTPGGTTTAQAVLWALGYEARTSSAAPNNPQSLKEEVIKAGFERAGIKPGDFKEKPLEALKQFGDPMMAAVVGIALGFKGKVVLAGGTQMLAVAALLKALEEDMSRFMIATTKWVVNDRSATFIDTAKDIGIITYAADLDFSKSEFKGLRDYENGYVKEGVGAGGATWLAVKAGFSPEDVSRKVDELYRRLMELKAT</sequence>
<reference key="1">
    <citation type="journal article" date="2008" name="J. Bacteriol.">
        <title>The complete genome sequence of Thermococcus onnurineus NA1 reveals a mixed heterotrophic and carboxydotrophic metabolism.</title>
        <authorList>
            <person name="Lee H.S."/>
            <person name="Kang S.G."/>
            <person name="Bae S.S."/>
            <person name="Lim J.K."/>
            <person name="Cho Y."/>
            <person name="Kim Y.J."/>
            <person name="Jeon J.H."/>
            <person name="Cha S.-S."/>
            <person name="Kwon K.K."/>
            <person name="Kim H.-T."/>
            <person name="Park C.-J."/>
            <person name="Lee H.-W."/>
            <person name="Kim S.I."/>
            <person name="Chun J."/>
            <person name="Colwell R.R."/>
            <person name="Kim S.-J."/>
            <person name="Lee J.-H."/>
        </authorList>
    </citation>
    <scope>NUCLEOTIDE SEQUENCE [LARGE SCALE GENOMIC DNA]</scope>
    <source>
        <strain>NA1</strain>
    </source>
</reference>
<gene>
    <name type="ordered locus">TON_0688</name>
</gene>
<protein>
    <recommendedName>
        <fullName evidence="1">UPF0284 protein TON_0688</fullName>
    </recommendedName>
</protein>
<accession>B6YV98</accession>
<comment type="similarity">
    <text evidence="1">Belongs to the UPF0284 family.</text>
</comment>
<evidence type="ECO:0000255" key="1">
    <source>
        <dbReference type="HAMAP-Rule" id="MF_01086"/>
    </source>
</evidence>
<dbReference type="EMBL" id="CP000855">
    <property type="protein sequence ID" value="ACJ16176.1"/>
    <property type="molecule type" value="Genomic_DNA"/>
</dbReference>
<dbReference type="RefSeq" id="WP_012571648.1">
    <property type="nucleotide sequence ID" value="NC_011529.1"/>
</dbReference>
<dbReference type="SMR" id="B6YV98"/>
<dbReference type="STRING" id="523850.TON_0688"/>
<dbReference type="GeneID" id="7016989"/>
<dbReference type="KEGG" id="ton:TON_0688"/>
<dbReference type="PATRIC" id="fig|523850.10.peg.691"/>
<dbReference type="eggNOG" id="arCOG04272">
    <property type="taxonomic scope" value="Archaea"/>
</dbReference>
<dbReference type="HOGENOM" id="CLU_053134_0_0_2"/>
<dbReference type="OrthoDB" id="9136at2157"/>
<dbReference type="Proteomes" id="UP000002727">
    <property type="component" value="Chromosome"/>
</dbReference>
<dbReference type="GO" id="GO:0008939">
    <property type="term" value="F:nicotinate-nucleotide-dimethylbenzimidazole phosphoribosyltransferase activity"/>
    <property type="evidence" value="ECO:0007669"/>
    <property type="project" value="InterPro"/>
</dbReference>
<dbReference type="CDD" id="cd02439">
    <property type="entry name" value="DMB-PRT_CobT"/>
    <property type="match status" value="1"/>
</dbReference>
<dbReference type="Gene3D" id="3.40.50.10210">
    <property type="match status" value="1"/>
</dbReference>
<dbReference type="HAMAP" id="MF_01086">
    <property type="entry name" value="UPF0284"/>
    <property type="match status" value="1"/>
</dbReference>
<dbReference type="InterPro" id="IPR003200">
    <property type="entry name" value="Nict_dMeBzImd_PRibTrfase"/>
</dbReference>
<dbReference type="InterPro" id="IPR002805">
    <property type="entry name" value="Nict_dMeBzImd_PRibTrfase_arc"/>
</dbReference>
<dbReference type="InterPro" id="IPR036087">
    <property type="entry name" value="Nict_dMeBzImd_PRibTrfase_sf"/>
</dbReference>
<dbReference type="NCBIfam" id="TIGR00303">
    <property type="entry name" value="nicotinate mononucleotide-dependent phosphoribosyltransferase CobT"/>
    <property type="match status" value="1"/>
</dbReference>
<dbReference type="NCBIfam" id="NF003368">
    <property type="entry name" value="PRK04447.1-1"/>
    <property type="match status" value="1"/>
</dbReference>
<dbReference type="NCBIfam" id="NF003372">
    <property type="entry name" value="PRK04447.1-5"/>
    <property type="match status" value="1"/>
</dbReference>
<dbReference type="PANTHER" id="PTHR38811">
    <property type="match status" value="1"/>
</dbReference>
<dbReference type="PANTHER" id="PTHR38811:SF1">
    <property type="entry name" value="UPF0284 PROTEIN SLL1500"/>
    <property type="match status" value="1"/>
</dbReference>
<dbReference type="Pfam" id="PF02277">
    <property type="entry name" value="DBI_PRT"/>
    <property type="match status" value="1"/>
</dbReference>
<dbReference type="SUPFAM" id="SSF52733">
    <property type="entry name" value="Nicotinate mononucleotide:5,6-dimethylbenzimidazole phosphoribosyltransferase (CobT)"/>
    <property type="match status" value="1"/>
</dbReference>
<feature type="chain" id="PRO_1000136910" description="UPF0284 protein TON_0688">
    <location>
        <begin position="1"/>
        <end position="335"/>
    </location>
</feature>
<name>Y688_THEON</name>
<organism>
    <name type="scientific">Thermococcus onnurineus (strain NA1)</name>
    <dbReference type="NCBI Taxonomy" id="523850"/>
    <lineage>
        <taxon>Archaea</taxon>
        <taxon>Methanobacteriati</taxon>
        <taxon>Methanobacteriota</taxon>
        <taxon>Thermococci</taxon>
        <taxon>Thermococcales</taxon>
        <taxon>Thermococcaceae</taxon>
        <taxon>Thermococcus</taxon>
    </lineage>
</organism>